<protein>
    <recommendedName>
        <fullName>Rho GTPase-activating protein 33</fullName>
    </recommendedName>
    <alternativeName>
        <fullName>Rho-type GTPase-activating protein 33</fullName>
    </alternativeName>
    <alternativeName>
        <fullName>Sorting nexin-26</fullName>
    </alternativeName>
    <alternativeName>
        <fullName>Tc10/CDC42 GTPase-activating protein</fullName>
    </alternativeName>
</protein>
<name>RHG33_HUMAN</name>
<dbReference type="EMBL" id="AY044864">
    <property type="protein sequence ID" value="AAK97795.1"/>
    <property type="molecule type" value="mRNA"/>
</dbReference>
<dbReference type="EMBL" id="AK096338">
    <property type="status" value="NOT_ANNOTATED_CDS"/>
    <property type="molecule type" value="mRNA"/>
</dbReference>
<dbReference type="EMBL" id="AK127255">
    <property type="protein sequence ID" value="BAC86902.1"/>
    <property type="status" value="ALT_FRAME"/>
    <property type="molecule type" value="mRNA"/>
</dbReference>
<dbReference type="EMBL" id="AC002398">
    <property type="protein sequence ID" value="AAB81197.1"/>
    <property type="molecule type" value="Genomic_DNA"/>
</dbReference>
<dbReference type="EMBL" id="AC002398">
    <property type="protein sequence ID" value="AAB81198.1"/>
    <property type="status" value="ALT_SEQ"/>
    <property type="molecule type" value="Genomic_DNA"/>
</dbReference>
<dbReference type="EMBL" id="AL137579">
    <property type="protein sequence ID" value="CAB70821.1"/>
    <property type="molecule type" value="mRNA"/>
</dbReference>
<dbReference type="EMBL" id="BC014084">
    <property type="protein sequence ID" value="AAH14084.2"/>
    <property type="molecule type" value="mRNA"/>
</dbReference>
<dbReference type="CCDS" id="CCDS12477.1">
    <molecule id="O14559-11"/>
</dbReference>
<dbReference type="CCDS" id="CCDS54254.1">
    <molecule id="O14559-10"/>
</dbReference>
<dbReference type="CCDS" id="CCDS92599.1">
    <molecule id="O14559-1"/>
</dbReference>
<dbReference type="PIR" id="T00704">
    <property type="entry name" value="T00704"/>
</dbReference>
<dbReference type="PIR" id="T00705">
    <property type="entry name" value="T00705"/>
</dbReference>
<dbReference type="PIR" id="T46289">
    <property type="entry name" value="T46289"/>
</dbReference>
<dbReference type="RefSeq" id="NP_001166101.1">
    <molecule id="O14559-10"/>
    <property type="nucleotide sequence ID" value="NM_001172630.2"/>
</dbReference>
<dbReference type="RefSeq" id="NP_001353107.1">
    <molecule id="O14559-1"/>
    <property type="nucleotide sequence ID" value="NM_001366178.1"/>
</dbReference>
<dbReference type="RefSeq" id="NP_443180.2">
    <molecule id="O14559-11"/>
    <property type="nucleotide sequence ID" value="NM_052948.3"/>
</dbReference>
<dbReference type="RefSeq" id="XP_005258545.1">
    <property type="nucleotide sequence ID" value="XM_005258488.1"/>
</dbReference>
<dbReference type="RefSeq" id="XP_011524721.1">
    <property type="nucleotide sequence ID" value="XM_011526419.1"/>
</dbReference>
<dbReference type="SMR" id="O14559"/>
<dbReference type="BioGRID" id="125448">
    <property type="interactions" value="11"/>
</dbReference>
<dbReference type="FunCoup" id="O14559">
    <property type="interactions" value="246"/>
</dbReference>
<dbReference type="IntAct" id="O14559">
    <property type="interactions" value="3"/>
</dbReference>
<dbReference type="STRING" id="9606.ENSP00000320038"/>
<dbReference type="TCDB" id="3.A.34.1.1">
    <property type="family name" value="the sorting nexins of the escrt complexes (sn-escrt)"/>
</dbReference>
<dbReference type="GlyCosmos" id="O14559">
    <property type="glycosylation" value="4 sites, 1 glycan"/>
</dbReference>
<dbReference type="GlyGen" id="O14559">
    <property type="glycosylation" value="14 sites, 1 O-linked glycan (5 sites)"/>
</dbReference>
<dbReference type="iPTMnet" id="O14559"/>
<dbReference type="PhosphoSitePlus" id="O14559"/>
<dbReference type="BioMuta" id="ARHGAP33"/>
<dbReference type="jPOST" id="O14559"/>
<dbReference type="MassIVE" id="O14559"/>
<dbReference type="PeptideAtlas" id="O14559"/>
<dbReference type="ProteomicsDB" id="48084">
    <molecule id="O14559-1"/>
</dbReference>
<dbReference type="ProteomicsDB" id="48085">
    <molecule id="O14559-10"/>
</dbReference>
<dbReference type="ProteomicsDB" id="48086">
    <molecule id="O14559-11"/>
</dbReference>
<dbReference type="ProteomicsDB" id="48087">
    <molecule id="O14559-12"/>
</dbReference>
<dbReference type="Antibodypedia" id="29527">
    <property type="antibodies" value="129 antibodies from 25 providers"/>
</dbReference>
<dbReference type="DNASU" id="115703"/>
<dbReference type="Ensembl" id="ENST00000007510.9">
    <molecule id="O14559-1"/>
    <property type="protein sequence ID" value="ENSP00000007510.6"/>
    <property type="gene ID" value="ENSG00000004777.19"/>
</dbReference>
<dbReference type="Ensembl" id="ENST00000314737.9">
    <molecule id="O14559-11"/>
    <property type="protein sequence ID" value="ENSP00000320038.4"/>
    <property type="gene ID" value="ENSG00000004777.19"/>
</dbReference>
<dbReference type="Ensembl" id="ENST00000378944.9">
    <molecule id="O14559-10"/>
    <property type="protein sequence ID" value="ENSP00000368227.5"/>
    <property type="gene ID" value="ENSG00000004777.19"/>
</dbReference>
<dbReference type="GeneID" id="115703"/>
<dbReference type="KEGG" id="hsa:115703"/>
<dbReference type="MANE-Select" id="ENST00000007510.9">
    <property type="protein sequence ID" value="ENSP00000007510.6"/>
    <property type="RefSeq nucleotide sequence ID" value="NM_001366178.1"/>
    <property type="RefSeq protein sequence ID" value="NP_001353107.1"/>
</dbReference>
<dbReference type="UCSC" id="uc002obs.3">
    <molecule id="O14559-1"/>
    <property type="organism name" value="human"/>
</dbReference>
<dbReference type="AGR" id="HGNC:23085"/>
<dbReference type="CTD" id="115703"/>
<dbReference type="DisGeNET" id="115703"/>
<dbReference type="GeneCards" id="ARHGAP33"/>
<dbReference type="HGNC" id="HGNC:23085">
    <property type="gene designation" value="ARHGAP33"/>
</dbReference>
<dbReference type="HPA" id="ENSG00000004777">
    <property type="expression patterns" value="Low tissue specificity"/>
</dbReference>
<dbReference type="MIM" id="614902">
    <property type="type" value="gene"/>
</dbReference>
<dbReference type="neXtProt" id="NX_O14559"/>
<dbReference type="OpenTargets" id="ENSG00000004777"/>
<dbReference type="PharmGKB" id="PA165393003"/>
<dbReference type="VEuPathDB" id="HostDB:ENSG00000004777"/>
<dbReference type="eggNOG" id="KOG1449">
    <property type="taxonomic scope" value="Eukaryota"/>
</dbReference>
<dbReference type="GeneTree" id="ENSGT00940000155110"/>
<dbReference type="InParanoid" id="O14559"/>
<dbReference type="OMA" id="FPIMTSH"/>
<dbReference type="OrthoDB" id="5873004at2759"/>
<dbReference type="PAN-GO" id="O14559">
    <property type="GO annotations" value="4 GO annotations based on evolutionary models"/>
</dbReference>
<dbReference type="PhylomeDB" id="O14559"/>
<dbReference type="TreeFam" id="TF351451"/>
<dbReference type="PathwayCommons" id="O14559"/>
<dbReference type="Reactome" id="R-HSA-9013148">
    <property type="pathway name" value="CDC42 GTPase cycle"/>
</dbReference>
<dbReference type="Reactome" id="R-HSA-9013149">
    <property type="pathway name" value="RAC1 GTPase cycle"/>
</dbReference>
<dbReference type="Reactome" id="R-HSA-9013406">
    <property type="pathway name" value="RHOQ GTPase cycle"/>
</dbReference>
<dbReference type="SignaLink" id="O14559"/>
<dbReference type="SIGNOR" id="O14559"/>
<dbReference type="BioGRID-ORCS" id="115703">
    <property type="hits" value="26 hits in 1160 CRISPR screens"/>
</dbReference>
<dbReference type="ChiTaRS" id="ARHGAP33">
    <property type="organism name" value="human"/>
</dbReference>
<dbReference type="GeneWiki" id="SNX26"/>
<dbReference type="GenomeRNAi" id="115703"/>
<dbReference type="Pharos" id="O14559">
    <property type="development level" value="Tbio"/>
</dbReference>
<dbReference type="PRO" id="PR:O14559"/>
<dbReference type="Proteomes" id="UP000005640">
    <property type="component" value="Chromosome 19"/>
</dbReference>
<dbReference type="RNAct" id="O14559">
    <property type="molecule type" value="protein"/>
</dbReference>
<dbReference type="Bgee" id="ENSG00000004777">
    <property type="expression patterns" value="Expressed in cortical plate and 155 other cell types or tissues"/>
</dbReference>
<dbReference type="ExpressionAtlas" id="O14559">
    <property type="expression patterns" value="baseline and differential"/>
</dbReference>
<dbReference type="GO" id="GO:0015629">
    <property type="term" value="C:actin cytoskeleton"/>
    <property type="evidence" value="ECO:0000318"/>
    <property type="project" value="GO_Central"/>
</dbReference>
<dbReference type="GO" id="GO:0005938">
    <property type="term" value="C:cell cortex"/>
    <property type="evidence" value="ECO:0000318"/>
    <property type="project" value="GO_Central"/>
</dbReference>
<dbReference type="GO" id="GO:0005829">
    <property type="term" value="C:cytosol"/>
    <property type="evidence" value="ECO:0000304"/>
    <property type="project" value="Reactome"/>
</dbReference>
<dbReference type="GO" id="GO:0043197">
    <property type="term" value="C:dendritic spine"/>
    <property type="evidence" value="ECO:0007669"/>
    <property type="project" value="Ensembl"/>
</dbReference>
<dbReference type="GO" id="GO:0001650">
    <property type="term" value="C:fibrillar center"/>
    <property type="evidence" value="ECO:0000318"/>
    <property type="project" value="GO_Central"/>
</dbReference>
<dbReference type="GO" id="GO:0098978">
    <property type="term" value="C:glutamatergic synapse"/>
    <property type="evidence" value="ECO:0007669"/>
    <property type="project" value="Ensembl"/>
</dbReference>
<dbReference type="GO" id="GO:0005794">
    <property type="term" value="C:Golgi apparatus"/>
    <property type="evidence" value="ECO:0000318"/>
    <property type="project" value="GO_Central"/>
</dbReference>
<dbReference type="GO" id="GO:0005654">
    <property type="term" value="C:nucleoplasm"/>
    <property type="evidence" value="ECO:0000318"/>
    <property type="project" value="GO_Central"/>
</dbReference>
<dbReference type="GO" id="GO:0005886">
    <property type="term" value="C:plasma membrane"/>
    <property type="evidence" value="ECO:0000318"/>
    <property type="project" value="GO_Central"/>
</dbReference>
<dbReference type="GO" id="GO:0014069">
    <property type="term" value="C:postsynaptic density"/>
    <property type="evidence" value="ECO:0007669"/>
    <property type="project" value="Ensembl"/>
</dbReference>
<dbReference type="GO" id="GO:0032991">
    <property type="term" value="C:protein-containing complex"/>
    <property type="evidence" value="ECO:0000314"/>
    <property type="project" value="UniProtKB"/>
</dbReference>
<dbReference type="GO" id="GO:0005096">
    <property type="term" value="F:GTPase activator activity"/>
    <property type="evidence" value="ECO:0000318"/>
    <property type="project" value="GO_Central"/>
</dbReference>
<dbReference type="GO" id="GO:0035091">
    <property type="term" value="F:phosphatidylinositol binding"/>
    <property type="evidence" value="ECO:0007669"/>
    <property type="project" value="InterPro"/>
</dbReference>
<dbReference type="GO" id="GO:0019901">
    <property type="term" value="F:protein kinase binding"/>
    <property type="evidence" value="ECO:0000353"/>
    <property type="project" value="UniProtKB"/>
</dbReference>
<dbReference type="GO" id="GO:0015031">
    <property type="term" value="P:protein transport"/>
    <property type="evidence" value="ECO:0007669"/>
    <property type="project" value="UniProtKB-KW"/>
</dbReference>
<dbReference type="GO" id="GO:0061001">
    <property type="term" value="P:regulation of dendritic spine morphogenesis"/>
    <property type="evidence" value="ECO:0007669"/>
    <property type="project" value="Ensembl"/>
</dbReference>
<dbReference type="GO" id="GO:0150052">
    <property type="term" value="P:regulation of postsynapse assembly"/>
    <property type="evidence" value="ECO:0007669"/>
    <property type="project" value="Ensembl"/>
</dbReference>
<dbReference type="GO" id="GO:0009636">
    <property type="term" value="P:response to toxic substance"/>
    <property type="evidence" value="ECO:0007669"/>
    <property type="project" value="Ensembl"/>
</dbReference>
<dbReference type="GO" id="GO:0007264">
    <property type="term" value="P:small GTPase-mediated signal transduction"/>
    <property type="evidence" value="ECO:0000318"/>
    <property type="project" value="GO_Central"/>
</dbReference>
<dbReference type="CDD" id="cd04384">
    <property type="entry name" value="RhoGAP_CdGAP"/>
    <property type="match status" value="1"/>
</dbReference>
<dbReference type="CDD" id="cd11835">
    <property type="entry name" value="SH3_ARHGAP32_33"/>
    <property type="match status" value="1"/>
</dbReference>
<dbReference type="FunFam" id="1.10.555.10:FF:000002">
    <property type="entry name" value="rho GTPase-activating protein 32 isoform X1"/>
    <property type="match status" value="1"/>
</dbReference>
<dbReference type="FunFam" id="2.30.30.40:FF:000030">
    <property type="entry name" value="rho GTPase-activating protein 32 isoform X2"/>
    <property type="match status" value="1"/>
</dbReference>
<dbReference type="FunFam" id="3.30.1520.10:FF:000095">
    <property type="entry name" value="Rho GTPase-activating protein 33"/>
    <property type="match status" value="1"/>
</dbReference>
<dbReference type="Gene3D" id="3.30.1520.10">
    <property type="entry name" value="Phox-like domain"/>
    <property type="match status" value="1"/>
</dbReference>
<dbReference type="Gene3D" id="1.10.555.10">
    <property type="entry name" value="Rho GTPase activation protein"/>
    <property type="match status" value="1"/>
</dbReference>
<dbReference type="Gene3D" id="2.30.30.40">
    <property type="entry name" value="SH3 Domains"/>
    <property type="match status" value="1"/>
</dbReference>
<dbReference type="InterPro" id="IPR051576">
    <property type="entry name" value="PX-Rho_GAP"/>
</dbReference>
<dbReference type="InterPro" id="IPR036871">
    <property type="entry name" value="PX_dom_sf"/>
</dbReference>
<dbReference type="InterPro" id="IPR008936">
    <property type="entry name" value="Rho_GTPase_activation_prot"/>
</dbReference>
<dbReference type="InterPro" id="IPR000198">
    <property type="entry name" value="RhoGAP_dom"/>
</dbReference>
<dbReference type="InterPro" id="IPR036028">
    <property type="entry name" value="SH3-like_dom_sf"/>
</dbReference>
<dbReference type="InterPro" id="IPR001452">
    <property type="entry name" value="SH3_domain"/>
</dbReference>
<dbReference type="PANTHER" id="PTHR15729">
    <property type="entry name" value="CDC42 GTPASE-ACTIVATING PROTEIN"/>
    <property type="match status" value="1"/>
</dbReference>
<dbReference type="PANTHER" id="PTHR15729:SF11">
    <property type="entry name" value="RHO GTPASE-ACTIVATING PROTEIN 33"/>
    <property type="match status" value="1"/>
</dbReference>
<dbReference type="Pfam" id="PF00620">
    <property type="entry name" value="RhoGAP"/>
    <property type="match status" value="1"/>
</dbReference>
<dbReference type="Pfam" id="PF14604">
    <property type="entry name" value="SH3_9"/>
    <property type="match status" value="1"/>
</dbReference>
<dbReference type="SMART" id="SM00324">
    <property type="entry name" value="RhoGAP"/>
    <property type="match status" value="1"/>
</dbReference>
<dbReference type="SMART" id="SM00326">
    <property type="entry name" value="SH3"/>
    <property type="match status" value="1"/>
</dbReference>
<dbReference type="SUPFAM" id="SSF48350">
    <property type="entry name" value="GTPase activation domain, GAP"/>
    <property type="match status" value="1"/>
</dbReference>
<dbReference type="SUPFAM" id="SSF64268">
    <property type="entry name" value="PX domain"/>
    <property type="match status" value="1"/>
</dbReference>
<dbReference type="SUPFAM" id="SSF50044">
    <property type="entry name" value="SH3-domain"/>
    <property type="match status" value="1"/>
</dbReference>
<dbReference type="PROSITE" id="PS50238">
    <property type="entry name" value="RHOGAP"/>
    <property type="match status" value="1"/>
</dbReference>
<dbReference type="PROSITE" id="PS50002">
    <property type="entry name" value="SH3"/>
    <property type="match status" value="1"/>
</dbReference>
<reference key="1">
    <citation type="submission" date="2001-07" db="EMBL/GenBank/DDBJ databases">
        <title>A novel member (SNX26) of the sorting nexin family.</title>
        <authorList>
            <person name="Hong W."/>
        </authorList>
    </citation>
    <scope>NUCLEOTIDE SEQUENCE [MRNA] (ISOFORM 4)</scope>
</reference>
<reference key="2">
    <citation type="journal article" date="2004" name="Nat. Genet.">
        <title>Complete sequencing and characterization of 21,243 full-length human cDNAs.</title>
        <authorList>
            <person name="Ota T."/>
            <person name="Suzuki Y."/>
            <person name="Nishikawa T."/>
            <person name="Otsuki T."/>
            <person name="Sugiyama T."/>
            <person name="Irie R."/>
            <person name="Wakamatsu A."/>
            <person name="Hayashi K."/>
            <person name="Sato H."/>
            <person name="Nagai K."/>
            <person name="Kimura K."/>
            <person name="Makita H."/>
            <person name="Sekine M."/>
            <person name="Obayashi M."/>
            <person name="Nishi T."/>
            <person name="Shibahara T."/>
            <person name="Tanaka T."/>
            <person name="Ishii S."/>
            <person name="Yamamoto J."/>
            <person name="Saito K."/>
            <person name="Kawai Y."/>
            <person name="Isono Y."/>
            <person name="Nakamura Y."/>
            <person name="Nagahari K."/>
            <person name="Murakami K."/>
            <person name="Yasuda T."/>
            <person name="Iwayanagi T."/>
            <person name="Wagatsuma M."/>
            <person name="Shiratori A."/>
            <person name="Sudo H."/>
            <person name="Hosoiri T."/>
            <person name="Kaku Y."/>
            <person name="Kodaira H."/>
            <person name="Kondo H."/>
            <person name="Sugawara M."/>
            <person name="Takahashi M."/>
            <person name="Kanda K."/>
            <person name="Yokoi T."/>
            <person name="Furuya T."/>
            <person name="Kikkawa E."/>
            <person name="Omura Y."/>
            <person name="Abe K."/>
            <person name="Kamihara K."/>
            <person name="Katsuta N."/>
            <person name="Sato K."/>
            <person name="Tanikawa M."/>
            <person name="Yamazaki M."/>
            <person name="Ninomiya K."/>
            <person name="Ishibashi T."/>
            <person name="Yamashita H."/>
            <person name="Murakawa K."/>
            <person name="Fujimori K."/>
            <person name="Tanai H."/>
            <person name="Kimata M."/>
            <person name="Watanabe M."/>
            <person name="Hiraoka S."/>
            <person name="Chiba Y."/>
            <person name="Ishida S."/>
            <person name="Ono Y."/>
            <person name="Takiguchi S."/>
            <person name="Watanabe S."/>
            <person name="Yosida M."/>
            <person name="Hotuta T."/>
            <person name="Kusano J."/>
            <person name="Kanehori K."/>
            <person name="Takahashi-Fujii A."/>
            <person name="Hara H."/>
            <person name="Tanase T.-O."/>
            <person name="Nomura Y."/>
            <person name="Togiya S."/>
            <person name="Komai F."/>
            <person name="Hara R."/>
            <person name="Takeuchi K."/>
            <person name="Arita M."/>
            <person name="Imose N."/>
            <person name="Musashino K."/>
            <person name="Yuuki H."/>
            <person name="Oshima A."/>
            <person name="Sasaki N."/>
            <person name="Aotsuka S."/>
            <person name="Yoshikawa Y."/>
            <person name="Matsunawa H."/>
            <person name="Ichihara T."/>
            <person name="Shiohata N."/>
            <person name="Sano S."/>
            <person name="Moriya S."/>
            <person name="Momiyama H."/>
            <person name="Satoh N."/>
            <person name="Takami S."/>
            <person name="Terashima Y."/>
            <person name="Suzuki O."/>
            <person name="Nakagawa S."/>
            <person name="Senoh A."/>
            <person name="Mizoguchi H."/>
            <person name="Goto Y."/>
            <person name="Shimizu F."/>
            <person name="Wakebe H."/>
            <person name="Hishigaki H."/>
            <person name="Watanabe T."/>
            <person name="Sugiyama A."/>
            <person name="Takemoto M."/>
            <person name="Kawakami B."/>
            <person name="Yamazaki M."/>
            <person name="Watanabe K."/>
            <person name="Kumagai A."/>
            <person name="Itakura S."/>
            <person name="Fukuzumi Y."/>
            <person name="Fujimori Y."/>
            <person name="Komiyama M."/>
            <person name="Tashiro H."/>
            <person name="Tanigami A."/>
            <person name="Fujiwara T."/>
            <person name="Ono T."/>
            <person name="Yamada K."/>
            <person name="Fujii Y."/>
            <person name="Ozaki K."/>
            <person name="Hirao M."/>
            <person name="Ohmori Y."/>
            <person name="Kawabata A."/>
            <person name="Hikiji T."/>
            <person name="Kobatake N."/>
            <person name="Inagaki H."/>
            <person name="Ikema Y."/>
            <person name="Okamoto S."/>
            <person name="Okitani R."/>
            <person name="Kawakami T."/>
            <person name="Noguchi S."/>
            <person name="Itoh T."/>
            <person name="Shigeta K."/>
            <person name="Senba T."/>
            <person name="Matsumura K."/>
            <person name="Nakajima Y."/>
            <person name="Mizuno T."/>
            <person name="Morinaga M."/>
            <person name="Sasaki M."/>
            <person name="Togashi T."/>
            <person name="Oyama M."/>
            <person name="Hata H."/>
            <person name="Watanabe M."/>
            <person name="Komatsu T."/>
            <person name="Mizushima-Sugano J."/>
            <person name="Satoh T."/>
            <person name="Shirai Y."/>
            <person name="Takahashi Y."/>
            <person name="Nakagawa K."/>
            <person name="Okumura K."/>
            <person name="Nagase T."/>
            <person name="Nomura N."/>
            <person name="Kikuchi H."/>
            <person name="Masuho Y."/>
            <person name="Yamashita R."/>
            <person name="Nakai K."/>
            <person name="Yada T."/>
            <person name="Nakamura Y."/>
            <person name="Ohara O."/>
            <person name="Isogai T."/>
            <person name="Sugano S."/>
        </authorList>
    </citation>
    <scope>NUCLEOTIDE SEQUENCE [LARGE SCALE MRNA] (ISOFORMS 2 AND 3)</scope>
    <source>
        <tissue>Hippocampus</tissue>
    </source>
</reference>
<reference key="3">
    <citation type="journal article" date="2004" name="Nature">
        <title>The DNA sequence and biology of human chromosome 19.</title>
        <authorList>
            <person name="Grimwood J."/>
            <person name="Gordon L.A."/>
            <person name="Olsen A.S."/>
            <person name="Terry A."/>
            <person name="Schmutz J."/>
            <person name="Lamerdin J.E."/>
            <person name="Hellsten U."/>
            <person name="Goodstein D."/>
            <person name="Couronne O."/>
            <person name="Tran-Gyamfi M."/>
            <person name="Aerts A."/>
            <person name="Altherr M."/>
            <person name="Ashworth L."/>
            <person name="Bajorek E."/>
            <person name="Black S."/>
            <person name="Branscomb E."/>
            <person name="Caenepeel S."/>
            <person name="Carrano A.V."/>
            <person name="Caoile C."/>
            <person name="Chan Y.M."/>
            <person name="Christensen M."/>
            <person name="Cleland C.A."/>
            <person name="Copeland A."/>
            <person name="Dalin E."/>
            <person name="Dehal P."/>
            <person name="Denys M."/>
            <person name="Detter J.C."/>
            <person name="Escobar J."/>
            <person name="Flowers D."/>
            <person name="Fotopulos D."/>
            <person name="Garcia C."/>
            <person name="Georgescu A.M."/>
            <person name="Glavina T."/>
            <person name="Gomez M."/>
            <person name="Gonzales E."/>
            <person name="Groza M."/>
            <person name="Hammon N."/>
            <person name="Hawkins T."/>
            <person name="Haydu L."/>
            <person name="Ho I."/>
            <person name="Huang W."/>
            <person name="Israni S."/>
            <person name="Jett J."/>
            <person name="Kadner K."/>
            <person name="Kimball H."/>
            <person name="Kobayashi A."/>
            <person name="Larionov V."/>
            <person name="Leem S.-H."/>
            <person name="Lopez F."/>
            <person name="Lou Y."/>
            <person name="Lowry S."/>
            <person name="Malfatti S."/>
            <person name="Martinez D."/>
            <person name="McCready P.M."/>
            <person name="Medina C."/>
            <person name="Morgan J."/>
            <person name="Nelson K."/>
            <person name="Nolan M."/>
            <person name="Ovcharenko I."/>
            <person name="Pitluck S."/>
            <person name="Pollard M."/>
            <person name="Popkie A.P."/>
            <person name="Predki P."/>
            <person name="Quan G."/>
            <person name="Ramirez L."/>
            <person name="Rash S."/>
            <person name="Retterer J."/>
            <person name="Rodriguez A."/>
            <person name="Rogers S."/>
            <person name="Salamov A."/>
            <person name="Salazar A."/>
            <person name="She X."/>
            <person name="Smith D."/>
            <person name="Slezak T."/>
            <person name="Solovyev V."/>
            <person name="Thayer N."/>
            <person name="Tice H."/>
            <person name="Tsai M."/>
            <person name="Ustaszewska A."/>
            <person name="Vo N."/>
            <person name="Wagner M."/>
            <person name="Wheeler J."/>
            <person name="Wu K."/>
            <person name="Xie G."/>
            <person name="Yang J."/>
            <person name="Dubchak I."/>
            <person name="Furey T.S."/>
            <person name="DeJong P."/>
            <person name="Dickson M."/>
            <person name="Gordon D."/>
            <person name="Eichler E.E."/>
            <person name="Pennacchio L.A."/>
            <person name="Richardson P."/>
            <person name="Stubbs L."/>
            <person name="Rokhsar D.S."/>
            <person name="Myers R.M."/>
            <person name="Rubin E.M."/>
            <person name="Lucas S.M."/>
        </authorList>
    </citation>
    <scope>NUCLEOTIDE SEQUENCE [LARGE SCALE GENOMIC DNA]</scope>
</reference>
<reference key="4">
    <citation type="journal article" date="2007" name="BMC Genomics">
        <title>The full-ORF clone resource of the German cDNA consortium.</title>
        <authorList>
            <person name="Bechtel S."/>
            <person name="Rosenfelder H."/>
            <person name="Duda A."/>
            <person name="Schmidt C.P."/>
            <person name="Ernst U."/>
            <person name="Wellenreuther R."/>
            <person name="Mehrle A."/>
            <person name="Schuster C."/>
            <person name="Bahr A."/>
            <person name="Bloecker H."/>
            <person name="Heubner D."/>
            <person name="Hoerlein A."/>
            <person name="Michel G."/>
            <person name="Wedler H."/>
            <person name="Koehrer K."/>
            <person name="Ottenwaelder B."/>
            <person name="Poustka A."/>
            <person name="Wiemann S."/>
            <person name="Schupp I."/>
        </authorList>
    </citation>
    <scope>NUCLEOTIDE SEQUENCE [LARGE SCALE MRNA] OF 426-1287</scope>
    <source>
        <tissue>Testis</tissue>
    </source>
</reference>
<reference key="5">
    <citation type="journal article" date="2004" name="Genome Res.">
        <title>The status, quality, and expansion of the NIH full-length cDNA project: the Mammalian Gene Collection (MGC).</title>
        <authorList>
            <consortium name="The MGC Project Team"/>
        </authorList>
    </citation>
    <scope>NUCLEOTIDE SEQUENCE [LARGE SCALE MRNA] OF 993-1287</scope>
    <source>
        <tissue>Pancreas</tissue>
    </source>
</reference>
<reference key="6">
    <citation type="journal article" date="2010" name="J. Proteome Res.">
        <title>Characterization of hNek6 interactome reveals an important role for its short N-terminal domain and colocalization with proteins at the centrosome.</title>
        <authorList>
            <person name="Vaz Meirelles G."/>
            <person name="Ferreira Lanza D.C."/>
            <person name="da Silva J.C."/>
            <person name="Santana Bernachi J."/>
            <person name="Paes Leme A.F."/>
            <person name="Kobarg J."/>
        </authorList>
    </citation>
    <scope>INTERACTION WITH NEK6</scope>
</reference>
<reference key="7">
    <citation type="journal article" date="2011" name="Sci. Signal.">
        <title>System-wide temporal characterization of the proteome and phosphoproteome of human embryonic stem cell differentiation.</title>
        <authorList>
            <person name="Rigbolt K.T."/>
            <person name="Prokhorova T.A."/>
            <person name="Akimov V."/>
            <person name="Henningsen J."/>
            <person name="Johansen P.T."/>
            <person name="Kratchmarova I."/>
            <person name="Kassem M."/>
            <person name="Mann M."/>
            <person name="Olsen J.V."/>
            <person name="Blagoev B."/>
        </authorList>
    </citation>
    <scope>PHOSPHORYLATION [LARGE SCALE ANALYSIS] AT SER-636</scope>
    <scope>IDENTIFICATION BY MASS SPECTROMETRY [LARGE SCALE ANALYSIS]</scope>
</reference>
<proteinExistence type="evidence at protein level"/>
<feature type="chain" id="PRO_0000056721" description="Rho GTPase-activating protein 33">
    <location>
        <begin position="1"/>
        <end position="1287"/>
    </location>
</feature>
<feature type="domain" description="PX; atypical">
    <location>
        <begin position="59"/>
        <end position="168"/>
    </location>
</feature>
<feature type="domain" description="SH3" evidence="4">
    <location>
        <begin position="186"/>
        <end position="248"/>
    </location>
</feature>
<feature type="domain" description="Rho-GAP" evidence="3">
    <location>
        <begin position="315"/>
        <end position="510"/>
    </location>
</feature>
<feature type="region of interest" description="Disordered" evidence="5">
    <location>
        <begin position="1"/>
        <end position="40"/>
    </location>
</feature>
<feature type="region of interest" description="Disordered" evidence="5">
    <location>
        <begin position="551"/>
        <end position="792"/>
    </location>
</feature>
<feature type="region of interest" description="Disordered" evidence="5">
    <location>
        <begin position="813"/>
        <end position="832"/>
    </location>
</feature>
<feature type="region of interest" description="Disordered" evidence="5">
    <location>
        <begin position="859"/>
        <end position="1030"/>
    </location>
</feature>
<feature type="region of interest" description="Disordered" evidence="5">
    <location>
        <begin position="1056"/>
        <end position="1075"/>
    </location>
</feature>
<feature type="region of interest" description="Disordered" evidence="5">
    <location>
        <begin position="1090"/>
        <end position="1134"/>
    </location>
</feature>
<feature type="region of interest" description="Disordered" evidence="5">
    <location>
        <begin position="1146"/>
        <end position="1287"/>
    </location>
</feature>
<feature type="compositionally biased region" description="Low complexity" evidence="5">
    <location>
        <begin position="558"/>
        <end position="571"/>
    </location>
</feature>
<feature type="compositionally biased region" description="Basic and acidic residues" evidence="5">
    <location>
        <begin position="572"/>
        <end position="584"/>
    </location>
</feature>
<feature type="compositionally biased region" description="Polar residues" evidence="5">
    <location>
        <begin position="622"/>
        <end position="645"/>
    </location>
</feature>
<feature type="compositionally biased region" description="Low complexity" evidence="5">
    <location>
        <begin position="672"/>
        <end position="709"/>
    </location>
</feature>
<feature type="compositionally biased region" description="Pro residues" evidence="5">
    <location>
        <begin position="752"/>
        <end position="766"/>
    </location>
</feature>
<feature type="compositionally biased region" description="Low complexity" evidence="5">
    <location>
        <begin position="813"/>
        <end position="829"/>
    </location>
</feature>
<feature type="compositionally biased region" description="Low complexity" evidence="5">
    <location>
        <begin position="896"/>
        <end position="919"/>
    </location>
</feature>
<feature type="compositionally biased region" description="Polar residues" evidence="5">
    <location>
        <begin position="972"/>
        <end position="981"/>
    </location>
</feature>
<feature type="compositionally biased region" description="Polar residues" evidence="5">
    <location>
        <begin position="1019"/>
        <end position="1028"/>
    </location>
</feature>
<feature type="compositionally biased region" description="Low complexity" evidence="5">
    <location>
        <begin position="1175"/>
        <end position="1189"/>
    </location>
</feature>
<feature type="compositionally biased region" description="Polar residues" evidence="5">
    <location>
        <begin position="1274"/>
        <end position="1287"/>
    </location>
</feature>
<feature type="site" description="Arginine finger; crucial for GTP hydrolysis by stabilizing the transition state" evidence="3">
    <location>
        <position position="350"/>
    </location>
</feature>
<feature type="modified residue" description="Phosphoserine" evidence="2">
    <location>
        <position position="8"/>
    </location>
</feature>
<feature type="modified residue" description="Phosphoserine" evidence="2">
    <location>
        <position position="570"/>
    </location>
</feature>
<feature type="modified residue" description="Phosphoserine" evidence="10">
    <location>
        <position position="636"/>
    </location>
</feature>
<feature type="modified residue" description="Phosphoserine" evidence="2">
    <location>
        <position position="727"/>
    </location>
</feature>
<feature type="modified residue" description="Phosphotyrosine" evidence="2">
    <location>
        <position position="1169"/>
    </location>
</feature>
<feature type="modified residue" description="Omega-N-methylarginine" evidence="2">
    <location>
        <position position="1244"/>
    </location>
</feature>
<feature type="splice variant" id="VSP_014287" description="In isoform 2." evidence="7">
    <location>
        <begin position="1"/>
        <end position="136"/>
    </location>
</feature>
<feature type="splice variant" id="VSP_014288" description="In isoform 4." evidence="8">
    <original>MV</original>
    <variation>MLSLSLCSHLWGPLILSALQ</variation>
    <location>
        <begin position="1"/>
        <end position="2"/>
    </location>
</feature>
<feature type="splice variant" id="VSP_014289" description="In isoform 4." evidence="8">
    <original>LDNHGRRLLLSEEASLNIPAVAAAHVIKRYTAQAPDELSFEVGDIVSVIDMPPTEDRSWWR</original>
    <variation>VGLGRGLGDSEWVRGCVCHHAQHREILDGNRVASAVEDEGAEVDGEAFRWGSLWVGESWDM</variation>
    <location>
        <begin position="168"/>
        <end position="228"/>
    </location>
</feature>
<feature type="splice variant" id="VSP_014290" description="In isoform 4." evidence="8">
    <location>
        <begin position="229"/>
        <end position="1287"/>
    </location>
</feature>
<feature type="splice variant" id="VSP_014291" description="In isoform 3." evidence="7">
    <location>
        <begin position="648"/>
        <end position="808"/>
    </location>
</feature>
<feature type="splice variant" id="VSP_014292" description="In isoform 2." evidence="7">
    <location>
        <begin position="998"/>
        <end position="1025"/>
    </location>
</feature>
<feature type="sequence conflict" description="In Ref. 2; AK096338." evidence="9" ref="2">
    <original>F</original>
    <variation>S</variation>
    <location>
        <position position="119"/>
    </location>
</feature>
<feature type="sequence conflict" description="In Ref. 4; CAB70821." evidence="9" ref="4">
    <original>P</original>
    <variation>L</variation>
    <location>
        <position position="1100"/>
    </location>
</feature>
<organism>
    <name type="scientific">Homo sapiens</name>
    <name type="common">Human</name>
    <dbReference type="NCBI Taxonomy" id="9606"/>
    <lineage>
        <taxon>Eukaryota</taxon>
        <taxon>Metazoa</taxon>
        <taxon>Chordata</taxon>
        <taxon>Craniata</taxon>
        <taxon>Vertebrata</taxon>
        <taxon>Euteleostomi</taxon>
        <taxon>Mammalia</taxon>
        <taxon>Eutheria</taxon>
        <taxon>Euarchontoglires</taxon>
        <taxon>Primates</taxon>
        <taxon>Haplorrhini</taxon>
        <taxon>Catarrhini</taxon>
        <taxon>Hominidae</taxon>
        <taxon>Homo</taxon>
    </lineage>
</organism>
<sequence length="1287" mass="137213">MVARSTDSLDGPGEGSVQPLPTAGGPSVKGKPGKRLSAPRGPFPRLADCAHFHYENVDFGHIQLLLSPDREGPSLSGENELVFGVQVTCQGRSWPVLRSYDDFRSLDAHLHRCIFDRRFSCLPELPPPPEGARAAQMLVPLLLQYLETLSGLVDSNLNCGPVLTWMELDNHGRRLLLSEEASLNIPAVAAAHVIKRYTAQAPDELSFEVGDIVSVIDMPPTEDRSWWRGKRGFQVGFFPSECVELFTERPGPGLKADADGPPCGIPAPQGISSLTSAVPRPRGKLAGLLRTFMRSRPSRQRLRQRGILRQRVFGCDLGEHLSNSGQDVPQVLRCCSEFIEAHGVVDGIYRLSGVSSNIQRLRHEFDSERIPELSGPAFLQDIHSVSSLCKLYFRELPNPLLTYQLYGKFSEAMSVPGEEERLVRVHDVIQQLPPPHYRTLEYLLRHLARMARHSANTSMHARNLAIVWAPNLLRSMELESVGMGGAAAFREVRVQSVVVEFLLTHVDVLFSDTFTSAGLDPAGRCLLPRPKSLAGSCPSTRLLTLEEAQARTQGRLGTPTEPTTPKAPASPAERRKGERGEKQRKPGGSSWKTFFALGRGPSVPRKKPLPWLGGTRAPPQPSGSRPDTVTLRSAKSEESLSSQASGAGLQRLHRLRRPHSSSDAFPVGPAPAGSCESLSSSSSSESSSSESSSSSSESSAAGLGALSGSPSHRTSAWLDDGDELDFSPPRCLEGLRGLDFDPLTFRCSSPTPGDPAPPASPAPPAPASAFPPRVTPQAISPRGPTSPASPAALDISEPLAVSVPPAVLELLGAGGAPASATPTPALSPGRSLRPHLIPLLLRGAEAPLTDACQQEMCSKLRGAQGPLGPDMESPLPPPPLSLLRPGGAPPPPPKNPARLMALALAERAQQVAEQQSQQECGGTPPASQSPFHRSLSLEVGGEPLGTSGSGPPPNSLAHPGAWVPGPPPYLPRQQSDGSLLRSQRPMGTSRRGLRGPAQVSAQLRAGGGGRDAPEAAAQSPCSVPSQVPTPGFFSPAPRECLPPFLGVPKPGLYPLGPPSFQPSSPAPVWRSSLGPPAPLDRGENLYYEIGASEGSPYSGPTRSWSPFRSMPPDRLNASYGMLGQSPPLHRSPDFLLSYPPAPSCFPPDHLGYSAPQHPARRPTPPEPLYVNLALGPRGPSPASSSSSSPPAHPRSRSDPGPPVPRLPQKQRAPWGPRTPHRVPGPWGPPEPLLLYRAAPPAYGRGGELHRGSLYRNGGQRGEGAGPPPPYPTPSWSLHSEGQTRSYC</sequence>
<accession>O14559</accession>
<accession>O14552</accession>
<accession>O14560</accession>
<accession>Q6ZSP6</accession>
<accession>Q96CP3</accession>
<accession>Q9NT23</accession>
<comment type="function">
    <text evidence="1">May be involved in several stages of intracellular trafficking. Could play an important role in the regulation of glucose transport by insulin. May act as a downstream effector of RHOQ/TC10 in the regulation of insulin-stimulated glucose transport (By similarity).</text>
</comment>
<comment type="subunit">
    <text evidence="1 6">Specifically interacts with CDC42 and RHOQ/TC10 through its Rho-GAP domain (By similarity). Interacts with NEK6.</text>
</comment>
<comment type="interaction">
    <interactant intactId="EBI-1210010">
        <id>O14559</id>
    </interactant>
    <interactant intactId="EBI-515315">
        <id>P06241</id>
        <label>FYN</label>
    </interactant>
    <organismsDiffer>false</organismsDiffer>
    <experiments>2</experiments>
</comment>
<comment type="alternative products">
    <event type="alternative splicing"/>
    <isoform>
        <id>O14559-1</id>
        <name>1</name>
        <sequence type="displayed"/>
    </isoform>
    <isoform>
        <id>O14559-10</id>
        <name>2</name>
        <sequence type="described" ref="VSP_014287 VSP_014292"/>
    </isoform>
    <isoform>
        <id>O14559-11</id>
        <name>3</name>
        <sequence type="described" ref="VSP_014291"/>
    </isoform>
    <isoform>
        <id>O14559-12</id>
        <name>4</name>
        <sequence type="described" ref="VSP_014288 VSP_014289 VSP_014290"/>
    </isoform>
</comment>
<comment type="similarity">
    <text evidence="9">Belongs to the PX domain-containing GAP family.</text>
</comment>
<comment type="sequence caution" evidence="9">
    <conflict type="erroneous gene model prediction">
        <sequence resource="EMBL-CDS" id="AAB81198"/>
    </conflict>
</comment>
<comment type="sequence caution" evidence="9">
    <molecule>Isoform 2</molecule>
    <conflict type="frameshift">
        <sequence resource="EMBL-CDS" id="BAC86902"/>
    </conflict>
</comment>
<evidence type="ECO:0000250" key="1"/>
<evidence type="ECO:0000250" key="2">
    <source>
        <dbReference type="UniProtKB" id="Q80YF9"/>
    </source>
</evidence>
<evidence type="ECO:0000255" key="3">
    <source>
        <dbReference type="PROSITE-ProRule" id="PRU00172"/>
    </source>
</evidence>
<evidence type="ECO:0000255" key="4">
    <source>
        <dbReference type="PROSITE-ProRule" id="PRU00192"/>
    </source>
</evidence>
<evidence type="ECO:0000256" key="5">
    <source>
        <dbReference type="SAM" id="MobiDB-lite"/>
    </source>
</evidence>
<evidence type="ECO:0000269" key="6">
    <source>
    </source>
</evidence>
<evidence type="ECO:0000303" key="7">
    <source>
    </source>
</evidence>
<evidence type="ECO:0000303" key="8">
    <source ref="1"/>
</evidence>
<evidence type="ECO:0000305" key="9"/>
<evidence type="ECO:0007744" key="10">
    <source>
    </source>
</evidence>
<gene>
    <name type="primary">ARHGAP33</name>
    <name type="synonym">SNX26</name>
    <name type="synonym">TCGAP</name>
</gene>
<keyword id="KW-0025">Alternative splicing</keyword>
<keyword id="KW-0343">GTPase activation</keyword>
<keyword id="KW-0488">Methylation</keyword>
<keyword id="KW-0597">Phosphoprotein</keyword>
<keyword id="KW-0653">Protein transport</keyword>
<keyword id="KW-1267">Proteomics identification</keyword>
<keyword id="KW-1185">Reference proteome</keyword>
<keyword id="KW-0728">SH3 domain</keyword>
<keyword id="KW-0813">Transport</keyword>